<organism>
    <name type="scientific">Debaryomyces hansenii (strain ATCC 36239 / CBS 767 / BCRC 21394 / JCM 1990 / NBRC 0083 / IGC 2968)</name>
    <name type="common">Yeast</name>
    <name type="synonym">Torulaspora hansenii</name>
    <dbReference type="NCBI Taxonomy" id="284592"/>
    <lineage>
        <taxon>Eukaryota</taxon>
        <taxon>Fungi</taxon>
        <taxon>Dikarya</taxon>
        <taxon>Ascomycota</taxon>
        <taxon>Saccharomycotina</taxon>
        <taxon>Pichiomycetes</taxon>
        <taxon>Debaryomycetaceae</taxon>
        <taxon>Debaryomyces</taxon>
    </lineage>
</organism>
<protein>
    <recommendedName>
        <fullName>Probable intron-encoded endonuclease aI2</fullName>
    </recommendedName>
    <component>
        <recommendedName>
            <fullName>Truncated non-functional cytochrome oxidase 1</fullName>
        </recommendedName>
    </component>
    <component>
        <recommendedName>
            <fullName>Intron-encoded endonuclease aI2</fullName>
            <ecNumber>3.1.-.-</ecNumber>
        </recommendedName>
    </component>
</protein>
<comment type="function">
    <text evidence="1">Mitochondrial DNA endonuclease involved in intron homing.</text>
</comment>
<comment type="subcellular location">
    <subcellularLocation>
        <location>Mitochondrion</location>
    </subcellularLocation>
    <subcellularLocation>
        <location evidence="3">Membrane</location>
        <topology evidence="3">Multi-pass membrane protein</topology>
    </subcellularLocation>
</comment>
<comment type="PTM">
    <text>The mature protein may arise from proteolytic cleavage of an in-frame translation of COX1 exons 1 and 2 plus intron 2, containing the aI2 open reading frame.</text>
</comment>
<comment type="similarity">
    <text evidence="3">In the C-terminal section; belongs to the LAGLIDADG endonuclease family.</text>
</comment>
<comment type="similarity">
    <text evidence="3">In the N-terminal section; belongs to the heme-copper respiratory oxidase family.</text>
</comment>
<accession>A9RAH7</accession>
<geneLocation type="mitochondrion"/>
<feature type="chain" id="PRO_0000355037" description="Truncated non-functional cytochrome oxidase 1">
    <location>
        <begin position="1"/>
        <end status="unknown"/>
    </location>
</feature>
<feature type="chain" id="PRO_0000355038" description="Intron-encoded endonuclease aI2">
    <location>
        <begin status="unknown"/>
        <end position="657"/>
    </location>
</feature>
<feature type="transmembrane region" description="Helical" evidence="2">
    <location>
        <begin position="19"/>
        <end position="39"/>
    </location>
</feature>
<feature type="transmembrane region" description="Helical" evidence="2">
    <location>
        <begin position="69"/>
        <end position="89"/>
    </location>
</feature>
<feature type="transmembrane region" description="Helical" evidence="2">
    <location>
        <begin position="103"/>
        <end position="123"/>
    </location>
</feature>
<feature type="transmembrane region" description="Helical" evidence="2">
    <location>
        <begin position="152"/>
        <end position="172"/>
    </location>
</feature>
<feature type="transmembrane region" description="Helical" evidence="2">
    <location>
        <begin position="188"/>
        <end position="208"/>
    </location>
</feature>
<feature type="transmembrane region" description="Helical" evidence="2">
    <location>
        <begin position="269"/>
        <end position="289"/>
    </location>
</feature>
<feature type="region of interest" description="COX1 exons 1 to 2 encoded">
    <location>
        <begin position="1"/>
        <end position="245"/>
    </location>
</feature>
<feature type="region of interest" description="COX1 intron 2 encoded">
    <location>
        <begin position="246"/>
        <end position="657"/>
    </location>
</feature>
<evidence type="ECO:0000250" key="1"/>
<evidence type="ECO:0000255" key="2"/>
<evidence type="ECO:0000305" key="3"/>
<proteinExistence type="inferred from homology"/>
<dbReference type="EC" id="3.1.-.-"/>
<dbReference type="EMBL" id="DQ508940">
    <property type="protein sequence ID" value="ABF58078.1"/>
    <property type="molecule type" value="Genomic_DNA"/>
</dbReference>
<dbReference type="SMR" id="A9RAH7"/>
<dbReference type="FunCoup" id="A9RAH7">
    <property type="interactions" value="7"/>
</dbReference>
<dbReference type="STRING" id="284592.A9RAH7"/>
<dbReference type="InParanoid" id="A9RAH7"/>
<dbReference type="Proteomes" id="UP000000599">
    <property type="component" value="Mitochondrion"/>
</dbReference>
<dbReference type="GO" id="GO:0016020">
    <property type="term" value="C:membrane"/>
    <property type="evidence" value="ECO:0007669"/>
    <property type="project" value="UniProtKB-SubCell"/>
</dbReference>
<dbReference type="GO" id="GO:0005739">
    <property type="term" value="C:mitochondrion"/>
    <property type="evidence" value="ECO:0007669"/>
    <property type="project" value="UniProtKB-SubCell"/>
</dbReference>
<dbReference type="GO" id="GO:0004129">
    <property type="term" value="F:cytochrome-c oxidase activity"/>
    <property type="evidence" value="ECO:0007669"/>
    <property type="project" value="InterPro"/>
</dbReference>
<dbReference type="GO" id="GO:0004519">
    <property type="term" value="F:endonuclease activity"/>
    <property type="evidence" value="ECO:0007669"/>
    <property type="project" value="UniProtKB-KW"/>
</dbReference>
<dbReference type="GO" id="GO:0020037">
    <property type="term" value="F:heme binding"/>
    <property type="evidence" value="ECO:0007669"/>
    <property type="project" value="InterPro"/>
</dbReference>
<dbReference type="GO" id="GO:0015990">
    <property type="term" value="P:electron transport coupled proton transport"/>
    <property type="evidence" value="ECO:0007669"/>
    <property type="project" value="TreeGrafter"/>
</dbReference>
<dbReference type="GO" id="GO:0006314">
    <property type="term" value="P:intron homing"/>
    <property type="evidence" value="ECO:0007669"/>
    <property type="project" value="UniProtKB-KW"/>
</dbReference>
<dbReference type="GO" id="GO:0006123">
    <property type="term" value="P:mitochondrial electron transport, cytochrome c to oxygen"/>
    <property type="evidence" value="ECO:0007669"/>
    <property type="project" value="TreeGrafter"/>
</dbReference>
<dbReference type="Gene3D" id="1.20.210.10">
    <property type="entry name" value="Cytochrome c oxidase-like, subunit I domain"/>
    <property type="match status" value="1"/>
</dbReference>
<dbReference type="Gene3D" id="3.10.28.10">
    <property type="entry name" value="Homing endonucleases"/>
    <property type="match status" value="2"/>
</dbReference>
<dbReference type="InterPro" id="IPR023616">
    <property type="entry name" value="Cyt_c_oxase-like_su1_dom"/>
</dbReference>
<dbReference type="InterPro" id="IPR036927">
    <property type="entry name" value="Cyt_c_oxase-like_su1_sf"/>
</dbReference>
<dbReference type="InterPro" id="IPR000883">
    <property type="entry name" value="Cyt_C_Oxase_1"/>
</dbReference>
<dbReference type="InterPro" id="IPR027434">
    <property type="entry name" value="Homing_endonucl"/>
</dbReference>
<dbReference type="InterPro" id="IPR004860">
    <property type="entry name" value="LAGLIDADG_dom"/>
</dbReference>
<dbReference type="PANTHER" id="PTHR10422">
    <property type="entry name" value="CYTOCHROME C OXIDASE SUBUNIT 1"/>
    <property type="match status" value="1"/>
</dbReference>
<dbReference type="PANTHER" id="PTHR10422:SF18">
    <property type="entry name" value="CYTOCHROME C OXIDASE SUBUNIT 1"/>
    <property type="match status" value="1"/>
</dbReference>
<dbReference type="Pfam" id="PF00115">
    <property type="entry name" value="COX1"/>
    <property type="match status" value="1"/>
</dbReference>
<dbReference type="Pfam" id="PF00961">
    <property type="entry name" value="LAGLIDADG_1"/>
    <property type="match status" value="2"/>
</dbReference>
<dbReference type="PRINTS" id="PR01165">
    <property type="entry name" value="CYCOXIDASEI"/>
</dbReference>
<dbReference type="SUPFAM" id="SSF81442">
    <property type="entry name" value="Cytochrome c oxidase subunit I-like"/>
    <property type="match status" value="1"/>
</dbReference>
<dbReference type="SUPFAM" id="SSF55608">
    <property type="entry name" value="Homing endonucleases"/>
    <property type="match status" value="2"/>
</dbReference>
<dbReference type="PROSITE" id="PS50855">
    <property type="entry name" value="COX1"/>
    <property type="match status" value="1"/>
</dbReference>
<keyword id="KW-0255">Endonuclease</keyword>
<keyword id="KW-0378">Hydrolase</keyword>
<keyword id="KW-0404">Intron homing</keyword>
<keyword id="KW-0472">Membrane</keyword>
<keyword id="KW-0496">Mitochondrion</keyword>
<keyword id="KW-0540">Nuclease</keyword>
<keyword id="KW-1185">Reference proteome</keyword>
<keyword id="KW-0812">Transmembrane</keyword>
<keyword id="KW-1133">Transmembrane helix</keyword>
<sequence length="657" mass="75166">MKQMSYVTRWLYSTSHKDIGMTYLGFGMLSAMMGTGMSVMMRMELSNGNSQFFHGNNQAFNVMMSGHALLMMFFFIMPVWMGAFGNFFLPMLMGAADMAFARLNNISFWCLPPALVCMVCSVLMEQGAGTGFTTYPPLSSMSAHSGPSVDLAMFAMHLTSMSSLLGAMNFMVTVLNMRTMGLHMVNMPLFAWAMFLTAMLLLLSLPVLTAAVTLLLMDRNFNTGFYEVGAGGDPVTYEHLFWFFGQWWPTNYVNNLEYCAMCWETYNKMYFIMLLITMYMSTNLLANMVKMLMTNRSNQQVTKNRMNKPHALRGDTSPKVRHKMFMNTMSKKSHALRRDTSLFSFPKNDKVRHMYDMNSKRYKSYLMGTSETTSTKSLKEMNMPSQRTGNPAITGTNLKENKNTMENSFNQWLAGLMDGDGCFGITQNKYTNCEMTVALEDEKTLRIIQNKFGGSMKLRSGAKAIRYRLHNQKGMINTMNAINGNMRHSKRLVQLHKVCSLLNMPVLEPMILTKNNSWLTGFFDADGTMNFSFKSSCHSAGGYTSKGKVSNHPQLTISVTNKYLQDVLPFKEMLGGNIYFDKSQNGYYKWSMQSKKDILNFVDYIKLNPSKTVKLNRMLLCNLYYDLKDLKSYMLNDNNMLQNKAWIKFENKWNKKF</sequence>
<name>AI2_DEBHA</name>
<reference key="1">
    <citation type="journal article" date="2008" name="FEMS Yeast Res.">
        <title>Promiscuous DNA in the nuclear genomes of hemiascomycetous yeasts.</title>
        <authorList>
            <person name="Sacerdot C."/>
            <person name="Casaregola S."/>
            <person name="Lafontaine I."/>
            <person name="Tekaia F."/>
            <person name="Dujon B."/>
            <person name="Ozier-Kalogeropoulos O."/>
        </authorList>
    </citation>
    <scope>NUCLEOTIDE SEQUENCE [LARGE SCALE GENOMIC DNA]</scope>
    <source>
        <strain>ATCC 36239 / CBS 767 / BCRC 21394 / JCM 1990 / NBRC 0083 / IGC 2968</strain>
    </source>
</reference>
<gene>
    <name type="primary">aI2</name>
</gene>